<evidence type="ECO:0000255" key="1">
    <source>
        <dbReference type="HAMAP-Rule" id="MF_01631"/>
    </source>
</evidence>
<evidence type="ECO:0000305" key="2"/>
<dbReference type="EC" id="2.7.7.23" evidence="1"/>
<dbReference type="EC" id="2.3.1.157" evidence="1"/>
<dbReference type="EMBL" id="AP008226">
    <property type="protein sequence ID" value="BAD70208.1"/>
    <property type="status" value="ALT_INIT"/>
    <property type="molecule type" value="Genomic_DNA"/>
</dbReference>
<dbReference type="RefSeq" id="WP_024119056.1">
    <property type="nucleotide sequence ID" value="NC_006461.1"/>
</dbReference>
<dbReference type="RefSeq" id="YP_143651.1">
    <property type="nucleotide sequence ID" value="NC_006461.1"/>
</dbReference>
<dbReference type="SMR" id="Q5SLA8"/>
<dbReference type="EnsemblBacteria" id="BAD70208">
    <property type="protein sequence ID" value="BAD70208"/>
    <property type="gene ID" value="BAD70208"/>
</dbReference>
<dbReference type="GeneID" id="3168468"/>
<dbReference type="KEGG" id="ttj:TTHA0385"/>
<dbReference type="PATRIC" id="fig|300852.9.peg.385"/>
<dbReference type="eggNOG" id="COG1207">
    <property type="taxonomic scope" value="Bacteria"/>
</dbReference>
<dbReference type="HOGENOM" id="CLU_029499_15_2_0"/>
<dbReference type="UniPathway" id="UPA00113">
    <property type="reaction ID" value="UER00532"/>
</dbReference>
<dbReference type="UniPathway" id="UPA00113">
    <property type="reaction ID" value="UER00533"/>
</dbReference>
<dbReference type="UniPathway" id="UPA00973"/>
<dbReference type="Proteomes" id="UP000000532">
    <property type="component" value="Chromosome"/>
</dbReference>
<dbReference type="GO" id="GO:0005737">
    <property type="term" value="C:cytoplasm"/>
    <property type="evidence" value="ECO:0007669"/>
    <property type="project" value="UniProtKB-SubCell"/>
</dbReference>
<dbReference type="GO" id="GO:0016020">
    <property type="term" value="C:membrane"/>
    <property type="evidence" value="ECO:0007669"/>
    <property type="project" value="GOC"/>
</dbReference>
<dbReference type="GO" id="GO:0019134">
    <property type="term" value="F:glucosamine-1-phosphate N-acetyltransferase activity"/>
    <property type="evidence" value="ECO:0007669"/>
    <property type="project" value="UniProtKB-UniRule"/>
</dbReference>
<dbReference type="GO" id="GO:0000287">
    <property type="term" value="F:magnesium ion binding"/>
    <property type="evidence" value="ECO:0007669"/>
    <property type="project" value="UniProtKB-UniRule"/>
</dbReference>
<dbReference type="GO" id="GO:0003977">
    <property type="term" value="F:UDP-N-acetylglucosamine diphosphorylase activity"/>
    <property type="evidence" value="ECO:0007669"/>
    <property type="project" value="UniProtKB-UniRule"/>
</dbReference>
<dbReference type="GO" id="GO:0000902">
    <property type="term" value="P:cell morphogenesis"/>
    <property type="evidence" value="ECO:0007669"/>
    <property type="project" value="UniProtKB-UniRule"/>
</dbReference>
<dbReference type="GO" id="GO:0071555">
    <property type="term" value="P:cell wall organization"/>
    <property type="evidence" value="ECO:0007669"/>
    <property type="project" value="UniProtKB-KW"/>
</dbReference>
<dbReference type="GO" id="GO:0009245">
    <property type="term" value="P:lipid A biosynthetic process"/>
    <property type="evidence" value="ECO:0007669"/>
    <property type="project" value="UniProtKB-UniRule"/>
</dbReference>
<dbReference type="GO" id="GO:0009252">
    <property type="term" value="P:peptidoglycan biosynthetic process"/>
    <property type="evidence" value="ECO:0007669"/>
    <property type="project" value="UniProtKB-UniRule"/>
</dbReference>
<dbReference type="GO" id="GO:0008360">
    <property type="term" value="P:regulation of cell shape"/>
    <property type="evidence" value="ECO:0007669"/>
    <property type="project" value="UniProtKB-KW"/>
</dbReference>
<dbReference type="GO" id="GO:0006048">
    <property type="term" value="P:UDP-N-acetylglucosamine biosynthetic process"/>
    <property type="evidence" value="ECO:0007669"/>
    <property type="project" value="UniProtKB-UniPathway"/>
</dbReference>
<dbReference type="CDD" id="cd02540">
    <property type="entry name" value="GT2_GlmU_N_bac"/>
    <property type="match status" value="1"/>
</dbReference>
<dbReference type="CDD" id="cd03353">
    <property type="entry name" value="LbH_GlmU_C"/>
    <property type="match status" value="1"/>
</dbReference>
<dbReference type="Gene3D" id="2.160.10.10">
    <property type="entry name" value="Hexapeptide repeat proteins"/>
    <property type="match status" value="1"/>
</dbReference>
<dbReference type="Gene3D" id="3.90.550.10">
    <property type="entry name" value="Spore Coat Polysaccharide Biosynthesis Protein SpsA, Chain A"/>
    <property type="match status" value="1"/>
</dbReference>
<dbReference type="HAMAP" id="MF_01631">
    <property type="entry name" value="GlmU"/>
    <property type="match status" value="1"/>
</dbReference>
<dbReference type="InterPro" id="IPR005882">
    <property type="entry name" value="Bifunctional_GlmU"/>
</dbReference>
<dbReference type="InterPro" id="IPR050065">
    <property type="entry name" value="GlmU-like"/>
</dbReference>
<dbReference type="InterPro" id="IPR038009">
    <property type="entry name" value="GlmU_C_LbH"/>
</dbReference>
<dbReference type="InterPro" id="IPR001451">
    <property type="entry name" value="Hexapep"/>
</dbReference>
<dbReference type="InterPro" id="IPR018357">
    <property type="entry name" value="Hexapep_transf_CS"/>
</dbReference>
<dbReference type="InterPro" id="IPR025877">
    <property type="entry name" value="MobA-like_NTP_Trfase"/>
</dbReference>
<dbReference type="InterPro" id="IPR029044">
    <property type="entry name" value="Nucleotide-diphossugar_trans"/>
</dbReference>
<dbReference type="InterPro" id="IPR011004">
    <property type="entry name" value="Trimer_LpxA-like_sf"/>
</dbReference>
<dbReference type="NCBIfam" id="TIGR01173">
    <property type="entry name" value="glmU"/>
    <property type="match status" value="1"/>
</dbReference>
<dbReference type="PANTHER" id="PTHR43584:SF3">
    <property type="entry name" value="BIFUNCTIONAL PROTEIN GLMU"/>
    <property type="match status" value="1"/>
</dbReference>
<dbReference type="PANTHER" id="PTHR43584">
    <property type="entry name" value="NUCLEOTIDYL TRANSFERASE"/>
    <property type="match status" value="1"/>
</dbReference>
<dbReference type="Pfam" id="PF00132">
    <property type="entry name" value="Hexapep"/>
    <property type="match status" value="1"/>
</dbReference>
<dbReference type="Pfam" id="PF12804">
    <property type="entry name" value="NTP_transf_3"/>
    <property type="match status" value="1"/>
</dbReference>
<dbReference type="SUPFAM" id="SSF53448">
    <property type="entry name" value="Nucleotide-diphospho-sugar transferases"/>
    <property type="match status" value="1"/>
</dbReference>
<dbReference type="SUPFAM" id="SSF51161">
    <property type="entry name" value="Trimeric LpxA-like enzymes"/>
    <property type="match status" value="1"/>
</dbReference>
<dbReference type="PROSITE" id="PS00101">
    <property type="entry name" value="HEXAPEP_TRANSFERASES"/>
    <property type="match status" value="1"/>
</dbReference>
<proteinExistence type="inferred from homology"/>
<name>GLMU_THET8</name>
<organism>
    <name type="scientific">Thermus thermophilus (strain ATCC 27634 / DSM 579 / HB8)</name>
    <dbReference type="NCBI Taxonomy" id="300852"/>
    <lineage>
        <taxon>Bacteria</taxon>
        <taxon>Thermotogati</taxon>
        <taxon>Deinococcota</taxon>
        <taxon>Deinococci</taxon>
        <taxon>Thermales</taxon>
        <taxon>Thermaceae</taxon>
        <taxon>Thermus</taxon>
    </lineage>
</organism>
<feature type="chain" id="PRO_0000233870" description="Bifunctional protein GlmU">
    <location>
        <begin position="1"/>
        <end position="453"/>
    </location>
</feature>
<feature type="region of interest" description="Pyrophosphorylase" evidence="1">
    <location>
        <begin position="1"/>
        <end position="225"/>
    </location>
</feature>
<feature type="region of interest" description="Linker" evidence="1">
    <location>
        <begin position="226"/>
        <end position="246"/>
    </location>
</feature>
<feature type="region of interest" description="N-acetyltransferase" evidence="1">
    <location>
        <begin position="247"/>
        <end position="453"/>
    </location>
</feature>
<feature type="active site" description="Proton acceptor" evidence="1">
    <location>
        <position position="359"/>
    </location>
</feature>
<feature type="binding site" evidence="1">
    <location>
        <begin position="7"/>
        <end position="10"/>
    </location>
    <ligand>
        <name>UDP-N-acetyl-alpha-D-glucosamine</name>
        <dbReference type="ChEBI" id="CHEBI:57705"/>
    </ligand>
</feature>
<feature type="binding site" evidence="1">
    <location>
        <position position="21"/>
    </location>
    <ligand>
        <name>UDP-N-acetyl-alpha-D-glucosamine</name>
        <dbReference type="ChEBI" id="CHEBI:57705"/>
    </ligand>
</feature>
<feature type="binding site" evidence="1">
    <location>
        <position position="72"/>
    </location>
    <ligand>
        <name>UDP-N-acetyl-alpha-D-glucosamine</name>
        <dbReference type="ChEBI" id="CHEBI:57705"/>
    </ligand>
</feature>
<feature type="binding site" evidence="1">
    <location>
        <begin position="77"/>
        <end position="78"/>
    </location>
    <ligand>
        <name>UDP-N-acetyl-alpha-D-glucosamine</name>
        <dbReference type="ChEBI" id="CHEBI:57705"/>
    </ligand>
</feature>
<feature type="binding site" evidence="1">
    <location>
        <position position="102"/>
    </location>
    <ligand>
        <name>Mg(2+)</name>
        <dbReference type="ChEBI" id="CHEBI:18420"/>
    </ligand>
</feature>
<feature type="binding site" evidence="1">
    <location>
        <position position="138"/>
    </location>
    <ligand>
        <name>UDP-N-acetyl-alpha-D-glucosamine</name>
        <dbReference type="ChEBI" id="CHEBI:57705"/>
    </ligand>
</feature>
<feature type="binding site" evidence="1">
    <location>
        <position position="152"/>
    </location>
    <ligand>
        <name>UDP-N-acetyl-alpha-D-glucosamine</name>
        <dbReference type="ChEBI" id="CHEBI:57705"/>
    </ligand>
</feature>
<feature type="binding site" evidence="1">
    <location>
        <position position="167"/>
    </location>
    <ligand>
        <name>UDP-N-acetyl-alpha-D-glucosamine</name>
        <dbReference type="ChEBI" id="CHEBI:57705"/>
    </ligand>
</feature>
<feature type="binding site" evidence="1">
    <location>
        <position position="223"/>
    </location>
    <ligand>
        <name>Mg(2+)</name>
        <dbReference type="ChEBI" id="CHEBI:18420"/>
    </ligand>
</feature>
<feature type="binding site" evidence="1">
    <location>
        <position position="223"/>
    </location>
    <ligand>
        <name>UDP-N-acetyl-alpha-D-glucosamine</name>
        <dbReference type="ChEBI" id="CHEBI:57705"/>
    </ligand>
</feature>
<feature type="binding site" evidence="1">
    <location>
        <position position="329"/>
    </location>
    <ligand>
        <name>UDP-N-acetyl-alpha-D-glucosamine</name>
        <dbReference type="ChEBI" id="CHEBI:57705"/>
    </ligand>
</feature>
<feature type="binding site" evidence="1">
    <location>
        <position position="347"/>
    </location>
    <ligand>
        <name>UDP-N-acetyl-alpha-D-glucosamine</name>
        <dbReference type="ChEBI" id="CHEBI:57705"/>
    </ligand>
</feature>
<feature type="binding site" evidence="1">
    <location>
        <position position="362"/>
    </location>
    <ligand>
        <name>UDP-N-acetyl-alpha-D-glucosamine</name>
        <dbReference type="ChEBI" id="CHEBI:57705"/>
    </ligand>
</feature>
<feature type="binding site" evidence="1">
    <location>
        <position position="373"/>
    </location>
    <ligand>
        <name>UDP-N-acetyl-alpha-D-glucosamine</name>
        <dbReference type="ChEBI" id="CHEBI:57705"/>
    </ligand>
</feature>
<feature type="binding site" evidence="1">
    <location>
        <position position="376"/>
    </location>
    <ligand>
        <name>acetyl-CoA</name>
        <dbReference type="ChEBI" id="CHEBI:57288"/>
    </ligand>
</feature>
<feature type="binding site" evidence="1">
    <location>
        <begin position="382"/>
        <end position="383"/>
    </location>
    <ligand>
        <name>acetyl-CoA</name>
        <dbReference type="ChEBI" id="CHEBI:57288"/>
    </ligand>
</feature>
<feature type="binding site" evidence="1">
    <location>
        <position position="401"/>
    </location>
    <ligand>
        <name>acetyl-CoA</name>
        <dbReference type="ChEBI" id="CHEBI:57288"/>
    </ligand>
</feature>
<feature type="binding site" evidence="1">
    <location>
        <position position="419"/>
    </location>
    <ligand>
        <name>acetyl-CoA</name>
        <dbReference type="ChEBI" id="CHEBI:57288"/>
    </ligand>
</feature>
<feature type="binding site" evidence="1">
    <location>
        <position position="436"/>
    </location>
    <ligand>
        <name>acetyl-CoA</name>
        <dbReference type="ChEBI" id="CHEBI:57288"/>
    </ligand>
</feature>
<reference key="1">
    <citation type="submission" date="2004-11" db="EMBL/GenBank/DDBJ databases">
        <title>Complete genome sequence of Thermus thermophilus HB8.</title>
        <authorList>
            <person name="Masui R."/>
            <person name="Kurokawa K."/>
            <person name="Nakagawa N."/>
            <person name="Tokunaga F."/>
            <person name="Koyama Y."/>
            <person name="Shibata T."/>
            <person name="Oshima T."/>
            <person name="Yokoyama S."/>
            <person name="Yasunaga T."/>
            <person name="Kuramitsu S."/>
        </authorList>
    </citation>
    <scope>NUCLEOTIDE SEQUENCE [LARGE SCALE GENOMIC DNA]</scope>
    <source>
        <strain>ATCC 27634 / DSM 579 / HB8</strain>
    </source>
</reference>
<protein>
    <recommendedName>
        <fullName evidence="1">Bifunctional protein GlmU</fullName>
    </recommendedName>
    <domain>
        <recommendedName>
            <fullName evidence="1">UDP-N-acetylglucosamine pyrophosphorylase</fullName>
            <ecNumber evidence="1">2.7.7.23</ecNumber>
        </recommendedName>
        <alternativeName>
            <fullName evidence="1">N-acetylglucosamine-1-phosphate uridyltransferase</fullName>
        </alternativeName>
    </domain>
    <domain>
        <recommendedName>
            <fullName evidence="1">Glucosamine-1-phosphate N-acetyltransferase</fullName>
            <ecNumber evidence="1">2.3.1.157</ecNumber>
        </recommendedName>
    </domain>
</protein>
<gene>
    <name evidence="1" type="primary">glmU</name>
    <name type="ordered locus">TTHA0385</name>
</gene>
<comment type="function">
    <text evidence="1">Catalyzes the last two sequential reactions in the de novo biosynthetic pathway for UDP-N-acetylglucosamine (UDP-GlcNAc). The C-terminal domain catalyzes the transfer of acetyl group from acetyl coenzyme A to glucosamine-1-phosphate (GlcN-1-P) to produce N-acetylglucosamine-1-phosphate (GlcNAc-1-P), which is converted into UDP-GlcNAc by the transfer of uridine 5-monophosphate (from uridine 5-triphosphate), a reaction catalyzed by the N-terminal domain.</text>
</comment>
<comment type="catalytic activity">
    <reaction evidence="1">
        <text>alpha-D-glucosamine 1-phosphate + acetyl-CoA = N-acetyl-alpha-D-glucosamine 1-phosphate + CoA + H(+)</text>
        <dbReference type="Rhea" id="RHEA:13725"/>
        <dbReference type="ChEBI" id="CHEBI:15378"/>
        <dbReference type="ChEBI" id="CHEBI:57287"/>
        <dbReference type="ChEBI" id="CHEBI:57288"/>
        <dbReference type="ChEBI" id="CHEBI:57776"/>
        <dbReference type="ChEBI" id="CHEBI:58516"/>
        <dbReference type="EC" id="2.3.1.157"/>
    </reaction>
</comment>
<comment type="catalytic activity">
    <reaction evidence="1">
        <text>N-acetyl-alpha-D-glucosamine 1-phosphate + UTP + H(+) = UDP-N-acetyl-alpha-D-glucosamine + diphosphate</text>
        <dbReference type="Rhea" id="RHEA:13509"/>
        <dbReference type="ChEBI" id="CHEBI:15378"/>
        <dbReference type="ChEBI" id="CHEBI:33019"/>
        <dbReference type="ChEBI" id="CHEBI:46398"/>
        <dbReference type="ChEBI" id="CHEBI:57705"/>
        <dbReference type="ChEBI" id="CHEBI:57776"/>
        <dbReference type="EC" id="2.7.7.23"/>
    </reaction>
</comment>
<comment type="cofactor">
    <cofactor evidence="1">
        <name>Mg(2+)</name>
        <dbReference type="ChEBI" id="CHEBI:18420"/>
    </cofactor>
    <text evidence="1">Binds 1 Mg(2+) ion per subunit.</text>
</comment>
<comment type="pathway">
    <text evidence="1">Nucleotide-sugar biosynthesis; UDP-N-acetyl-alpha-D-glucosamine biosynthesis; N-acetyl-alpha-D-glucosamine 1-phosphate from alpha-D-glucosamine 6-phosphate (route II): step 2/2.</text>
</comment>
<comment type="pathway">
    <text evidence="1">Nucleotide-sugar biosynthesis; UDP-N-acetyl-alpha-D-glucosamine biosynthesis; UDP-N-acetyl-alpha-D-glucosamine from N-acetyl-alpha-D-glucosamine 1-phosphate: step 1/1.</text>
</comment>
<comment type="pathway">
    <text evidence="1">Bacterial outer membrane biogenesis; LPS lipid A biosynthesis.</text>
</comment>
<comment type="subunit">
    <text evidence="1">Homotrimer.</text>
</comment>
<comment type="subcellular location">
    <subcellularLocation>
        <location evidence="1">Cytoplasm</location>
    </subcellularLocation>
</comment>
<comment type="similarity">
    <text evidence="1">In the N-terminal section; belongs to the N-acetylglucosamine-1-phosphate uridyltransferase family.</text>
</comment>
<comment type="similarity">
    <text evidence="1">In the C-terminal section; belongs to the transferase hexapeptide repeat family.</text>
</comment>
<comment type="sequence caution" evidence="2">
    <conflict type="erroneous initiation">
        <sequence resource="EMBL-CDS" id="BAD70208"/>
    </conflict>
</comment>
<sequence>MHAHVILAAGQGTRMRSRLPKVLHPLLGKPMLLYALEAALALKPERLVVVVGHGGEKVVEALEGYPVEVAWQKEQLGTAHALLQAEGLLRDFPGPFLVTQGDTPLLSPRTLEALLRRVREGAGMALLTAELPDPTGYGRILREGEEVLGNVEEKDAPPEVRAIREVNAGAYAFDGFLFQALKEVRNENAAREYYLPDLIAIYRAHGRRVLAVRGVAEEALGVNTREELARVEGVLLRRLRAEWMGKGVRMILPETIYLEPSVELAPDVTLWPGAVLKGKTRIGEGCEVGPYAVLEDTVLEPGAKVLAHTVAQGAHLHPGASAGPFARLRPGAVLMEEVHVGNFVEVKNSLLHKGVKAGHLAYLGDAEVGEGTNIGAGVITANYDGKRKHKTEIGKKAFIGSNSVLVAPVRVGDRALVGAGSVITQDVPEGALAVARERQKNLEGYALRKLGEG</sequence>
<accession>Q5SLA8</accession>
<keyword id="KW-0012">Acyltransferase</keyword>
<keyword id="KW-0133">Cell shape</keyword>
<keyword id="KW-0961">Cell wall biogenesis/degradation</keyword>
<keyword id="KW-0963">Cytoplasm</keyword>
<keyword id="KW-0460">Magnesium</keyword>
<keyword id="KW-0479">Metal-binding</keyword>
<keyword id="KW-0511">Multifunctional enzyme</keyword>
<keyword id="KW-0548">Nucleotidyltransferase</keyword>
<keyword id="KW-0573">Peptidoglycan synthesis</keyword>
<keyword id="KW-1185">Reference proteome</keyword>
<keyword id="KW-0677">Repeat</keyword>
<keyword id="KW-0808">Transferase</keyword>